<evidence type="ECO:0000255" key="1">
    <source>
        <dbReference type="HAMAP-Rule" id="MF_00006"/>
    </source>
</evidence>
<sequence length="473" mass="52004">MANTSHSSQDQFANKAQAWSARFSEPVSDLVKRYTASVDFDKRMARHDIRGSLAHADMLAAQGIISAQDLADIQRGMQQILSEIDAGSFQWLLDLEDVHLNIEKRLVELVGDAGKRLHTGRSRNDQVATDIRLWLRDEIDTLVDLLRQLRHALATVALENAATIMPGFTHLQVAQPVTFGHHLLAYAEMFGRDAERLADCRRRVNRLPLGAAALAGTSYPIDRERVARTLGFDGVCRNSLDAVSDRDFGIEFCAAGALIMTHISRLSEELVLWMSPRVGFIDLADRFCTGSSIMPQKKNPDVPELARGKTGRVNGHLVALLTLMKGQPLAYNKDNQEDKEGLFDTADTLRDTLTIFADMAGGIKVKADNMRAAALQGFATATDLADYLVKRGLPFRDAHEIVAHAVRDCEQRGCDLADLSLADLQAYHPSIGEDIHQVLTLEGSVAARKHIGGTAPERVREEAQRVLAETAGA</sequence>
<proteinExistence type="inferred from homology"/>
<protein>
    <recommendedName>
        <fullName evidence="1">Argininosuccinate lyase</fullName>
        <shortName evidence="1">ASAL</shortName>
        <ecNumber evidence="1">4.3.2.1</ecNumber>
    </recommendedName>
    <alternativeName>
        <fullName evidence="1">Arginosuccinase</fullName>
    </alternativeName>
</protein>
<keyword id="KW-0028">Amino-acid biosynthesis</keyword>
<keyword id="KW-0055">Arginine biosynthesis</keyword>
<keyword id="KW-0963">Cytoplasm</keyword>
<keyword id="KW-0456">Lyase</keyword>
<keyword id="KW-1185">Reference proteome</keyword>
<feature type="chain" id="PRO_0000137744" description="Argininosuccinate lyase">
    <location>
        <begin position="1"/>
        <end position="473"/>
    </location>
</feature>
<name>ARLY_BORPE</name>
<dbReference type="EC" id="4.3.2.1" evidence="1"/>
<dbReference type="EMBL" id="BX640419">
    <property type="protein sequence ID" value="CAE42979.1"/>
    <property type="molecule type" value="Genomic_DNA"/>
</dbReference>
<dbReference type="RefSeq" id="NP_881310.1">
    <property type="nucleotide sequence ID" value="NC_002929.2"/>
</dbReference>
<dbReference type="RefSeq" id="WP_003812010.1">
    <property type="nucleotide sequence ID" value="NZ_CP039022.1"/>
</dbReference>
<dbReference type="SMR" id="Q7VVG6"/>
<dbReference type="STRING" id="257313.BP2702"/>
<dbReference type="PaxDb" id="257313-BP2702"/>
<dbReference type="GeneID" id="93203192"/>
<dbReference type="KEGG" id="bpe:BP2702"/>
<dbReference type="PATRIC" id="fig|257313.5.peg.2910"/>
<dbReference type="eggNOG" id="COG0165">
    <property type="taxonomic scope" value="Bacteria"/>
</dbReference>
<dbReference type="HOGENOM" id="CLU_027272_2_3_4"/>
<dbReference type="UniPathway" id="UPA00068">
    <property type="reaction ID" value="UER00114"/>
</dbReference>
<dbReference type="Proteomes" id="UP000002676">
    <property type="component" value="Chromosome"/>
</dbReference>
<dbReference type="GO" id="GO:0005829">
    <property type="term" value="C:cytosol"/>
    <property type="evidence" value="ECO:0007669"/>
    <property type="project" value="TreeGrafter"/>
</dbReference>
<dbReference type="GO" id="GO:0004056">
    <property type="term" value="F:argininosuccinate lyase activity"/>
    <property type="evidence" value="ECO:0007669"/>
    <property type="project" value="UniProtKB-UniRule"/>
</dbReference>
<dbReference type="GO" id="GO:0042450">
    <property type="term" value="P:arginine biosynthetic process via ornithine"/>
    <property type="evidence" value="ECO:0007669"/>
    <property type="project" value="InterPro"/>
</dbReference>
<dbReference type="GO" id="GO:0006526">
    <property type="term" value="P:L-arginine biosynthetic process"/>
    <property type="evidence" value="ECO:0007669"/>
    <property type="project" value="UniProtKB-UniRule"/>
</dbReference>
<dbReference type="CDD" id="cd01359">
    <property type="entry name" value="Argininosuccinate_lyase"/>
    <property type="match status" value="1"/>
</dbReference>
<dbReference type="FunFam" id="1.10.275.10:FF:000002">
    <property type="entry name" value="Argininosuccinate lyase"/>
    <property type="match status" value="1"/>
</dbReference>
<dbReference type="FunFam" id="1.10.40.30:FF:000001">
    <property type="entry name" value="Argininosuccinate lyase"/>
    <property type="match status" value="1"/>
</dbReference>
<dbReference type="FunFam" id="1.20.200.10:FF:000015">
    <property type="entry name" value="argininosuccinate lyase isoform X2"/>
    <property type="match status" value="1"/>
</dbReference>
<dbReference type="Gene3D" id="1.10.40.30">
    <property type="entry name" value="Fumarase/aspartase (C-terminal domain)"/>
    <property type="match status" value="1"/>
</dbReference>
<dbReference type="Gene3D" id="1.20.200.10">
    <property type="entry name" value="Fumarase/aspartase (Central domain)"/>
    <property type="match status" value="1"/>
</dbReference>
<dbReference type="Gene3D" id="1.10.275.10">
    <property type="entry name" value="Fumarase/aspartase (N-terminal domain)"/>
    <property type="match status" value="1"/>
</dbReference>
<dbReference type="HAMAP" id="MF_00006">
    <property type="entry name" value="Arg_succ_lyase"/>
    <property type="match status" value="1"/>
</dbReference>
<dbReference type="InterPro" id="IPR029419">
    <property type="entry name" value="Arg_succ_lyase_C"/>
</dbReference>
<dbReference type="InterPro" id="IPR009049">
    <property type="entry name" value="Argininosuccinate_lyase"/>
</dbReference>
<dbReference type="InterPro" id="IPR024083">
    <property type="entry name" value="Fumarase/histidase_N"/>
</dbReference>
<dbReference type="InterPro" id="IPR020557">
    <property type="entry name" value="Fumarate_lyase_CS"/>
</dbReference>
<dbReference type="InterPro" id="IPR000362">
    <property type="entry name" value="Fumarate_lyase_fam"/>
</dbReference>
<dbReference type="InterPro" id="IPR022761">
    <property type="entry name" value="Fumarate_lyase_N"/>
</dbReference>
<dbReference type="InterPro" id="IPR008948">
    <property type="entry name" value="L-Aspartase-like"/>
</dbReference>
<dbReference type="NCBIfam" id="TIGR00838">
    <property type="entry name" value="argH"/>
    <property type="match status" value="1"/>
</dbReference>
<dbReference type="PANTHER" id="PTHR43814">
    <property type="entry name" value="ARGININOSUCCINATE LYASE"/>
    <property type="match status" value="1"/>
</dbReference>
<dbReference type="PANTHER" id="PTHR43814:SF1">
    <property type="entry name" value="ARGININOSUCCINATE LYASE"/>
    <property type="match status" value="1"/>
</dbReference>
<dbReference type="Pfam" id="PF14698">
    <property type="entry name" value="ASL_C2"/>
    <property type="match status" value="1"/>
</dbReference>
<dbReference type="Pfam" id="PF00206">
    <property type="entry name" value="Lyase_1"/>
    <property type="match status" value="1"/>
</dbReference>
<dbReference type="PRINTS" id="PR00145">
    <property type="entry name" value="ARGSUCLYASE"/>
</dbReference>
<dbReference type="PRINTS" id="PR00149">
    <property type="entry name" value="FUMRATELYASE"/>
</dbReference>
<dbReference type="SUPFAM" id="SSF48557">
    <property type="entry name" value="L-aspartase-like"/>
    <property type="match status" value="1"/>
</dbReference>
<dbReference type="PROSITE" id="PS00163">
    <property type="entry name" value="FUMARATE_LYASES"/>
    <property type="match status" value="1"/>
</dbReference>
<accession>Q7VVG6</accession>
<comment type="catalytic activity">
    <reaction evidence="1">
        <text>2-(N(omega)-L-arginino)succinate = fumarate + L-arginine</text>
        <dbReference type="Rhea" id="RHEA:24020"/>
        <dbReference type="ChEBI" id="CHEBI:29806"/>
        <dbReference type="ChEBI" id="CHEBI:32682"/>
        <dbReference type="ChEBI" id="CHEBI:57472"/>
        <dbReference type="EC" id="4.3.2.1"/>
    </reaction>
</comment>
<comment type="pathway">
    <text evidence="1">Amino-acid biosynthesis; L-arginine biosynthesis; L-arginine from L-ornithine and carbamoyl phosphate: step 3/3.</text>
</comment>
<comment type="subcellular location">
    <subcellularLocation>
        <location evidence="1">Cytoplasm</location>
    </subcellularLocation>
</comment>
<comment type="similarity">
    <text evidence="1">Belongs to the lyase 1 family. Argininosuccinate lyase subfamily.</text>
</comment>
<organism>
    <name type="scientific">Bordetella pertussis (strain Tohama I / ATCC BAA-589 / NCTC 13251)</name>
    <dbReference type="NCBI Taxonomy" id="257313"/>
    <lineage>
        <taxon>Bacteria</taxon>
        <taxon>Pseudomonadati</taxon>
        <taxon>Pseudomonadota</taxon>
        <taxon>Betaproteobacteria</taxon>
        <taxon>Burkholderiales</taxon>
        <taxon>Alcaligenaceae</taxon>
        <taxon>Bordetella</taxon>
    </lineage>
</organism>
<reference key="1">
    <citation type="journal article" date="2003" name="Nat. Genet.">
        <title>Comparative analysis of the genome sequences of Bordetella pertussis, Bordetella parapertussis and Bordetella bronchiseptica.</title>
        <authorList>
            <person name="Parkhill J."/>
            <person name="Sebaihia M."/>
            <person name="Preston A."/>
            <person name="Murphy L.D."/>
            <person name="Thomson N.R."/>
            <person name="Harris D.E."/>
            <person name="Holden M.T.G."/>
            <person name="Churcher C.M."/>
            <person name="Bentley S.D."/>
            <person name="Mungall K.L."/>
            <person name="Cerdeno-Tarraga A.-M."/>
            <person name="Temple L."/>
            <person name="James K.D."/>
            <person name="Harris B."/>
            <person name="Quail M.A."/>
            <person name="Achtman M."/>
            <person name="Atkin R."/>
            <person name="Baker S."/>
            <person name="Basham D."/>
            <person name="Bason N."/>
            <person name="Cherevach I."/>
            <person name="Chillingworth T."/>
            <person name="Collins M."/>
            <person name="Cronin A."/>
            <person name="Davis P."/>
            <person name="Doggett J."/>
            <person name="Feltwell T."/>
            <person name="Goble A."/>
            <person name="Hamlin N."/>
            <person name="Hauser H."/>
            <person name="Holroyd S."/>
            <person name="Jagels K."/>
            <person name="Leather S."/>
            <person name="Moule S."/>
            <person name="Norberczak H."/>
            <person name="O'Neil S."/>
            <person name="Ormond D."/>
            <person name="Price C."/>
            <person name="Rabbinowitsch E."/>
            <person name="Rutter S."/>
            <person name="Sanders M."/>
            <person name="Saunders D."/>
            <person name="Seeger K."/>
            <person name="Sharp S."/>
            <person name="Simmonds M."/>
            <person name="Skelton J."/>
            <person name="Squares R."/>
            <person name="Squares S."/>
            <person name="Stevens K."/>
            <person name="Unwin L."/>
            <person name="Whitehead S."/>
            <person name="Barrell B.G."/>
            <person name="Maskell D.J."/>
        </authorList>
    </citation>
    <scope>NUCLEOTIDE SEQUENCE [LARGE SCALE GENOMIC DNA]</scope>
    <source>
        <strain>Tohama I / ATCC BAA-589 / NCTC 13251</strain>
    </source>
</reference>
<gene>
    <name evidence="1" type="primary">argH</name>
    <name type="ordered locus">BP2702</name>
</gene>